<organism>
    <name type="scientific">Oryza sativa</name>
    <name type="common">Rice</name>
    <dbReference type="NCBI Taxonomy" id="4530"/>
    <lineage>
        <taxon>Eukaryota</taxon>
        <taxon>Viridiplantae</taxon>
        <taxon>Streptophyta</taxon>
        <taxon>Embryophyta</taxon>
        <taxon>Tracheophyta</taxon>
        <taxon>Spermatophyta</taxon>
        <taxon>Magnoliopsida</taxon>
        <taxon>Liliopsida</taxon>
        <taxon>Poales</taxon>
        <taxon>Poaceae</taxon>
        <taxon>BOP clade</taxon>
        <taxon>Oryzoideae</taxon>
        <taxon>Oryzeae</taxon>
        <taxon>Oryzinae</taxon>
        <taxon>Oryza</taxon>
    </lineage>
</organism>
<sequence length="498" mass="53955">MRTNPTTSRPGVSTIEEKSTGRIDQIIGPVLDVTFPPGKLPYIYNALVVKSRDTDGKQINVTCEVQQLLGNNRVRAVAMSATDGLMRGMEVIDTGAPLSVPVGGATLGRIFNVLGEPVDNLGPVDTSATFPIHRSAPAFIELDTKLSIFETGIKVVDLLAPYRRGGKIGLFGGAGVGKTVLIMELINNIAKAHGGVSVFGGVGERTREGNDLYMEMKESGVINEKNLEESKVALVYGQMNEPPGARMRVGLTALTMAEYFRDVNKQDVLLFIDNIFRFVQAGSEVSALLGRMPSAVGYQPTLSTEMGSLQERITSTKKGSITSIQAVYVPADDLTDPAPATTFAHLDATTVLSRGLASKGIYPAVDPLDSTSTMLQPRIVGNEHYETAQRVKQTLQRYKELQDIIAILGLDELSEEDRLTVARARKIERFLSQPFFVAEVFTGSPGKYVGLAETIRGFQLILSGELDGLPEQAFYLVGNIDEASTKAINLEEENKLKK</sequence>
<reference key="1">
    <citation type="journal article" date="2004" name="Plant Physiol.">
        <title>A comparison of rice chloroplast genomes.</title>
        <authorList>
            <person name="Tang J."/>
            <person name="Xia H."/>
            <person name="Cao M."/>
            <person name="Zhang X."/>
            <person name="Zeng W."/>
            <person name="Hu S."/>
            <person name="Tong W."/>
            <person name="Wang J."/>
            <person name="Wang J."/>
            <person name="Yu J."/>
            <person name="Yang H."/>
            <person name="Zhu L."/>
        </authorList>
    </citation>
    <scope>NUCLEOTIDE SEQUENCE [LARGE SCALE GENOMIC DNA]</scope>
    <source>
        <strain>cv. PA64s</strain>
    </source>
</reference>
<proteinExistence type="inferred from homology"/>
<protein>
    <recommendedName>
        <fullName evidence="1">ATP synthase subunit beta, chloroplastic</fullName>
        <ecNumber evidence="1">7.1.2.2</ecNumber>
    </recommendedName>
    <alternativeName>
        <fullName evidence="1">ATP synthase F1 sector subunit beta</fullName>
    </alternativeName>
    <alternativeName>
        <fullName evidence="1">F-ATPase subunit beta</fullName>
    </alternativeName>
</protein>
<comment type="function">
    <text evidence="1">Produces ATP from ADP in the presence of a proton gradient across the membrane. The catalytic sites are hosted primarily by the beta subunits.</text>
</comment>
<comment type="catalytic activity">
    <reaction evidence="1">
        <text>ATP + H2O + 4 H(+)(in) = ADP + phosphate + 5 H(+)(out)</text>
        <dbReference type="Rhea" id="RHEA:57720"/>
        <dbReference type="ChEBI" id="CHEBI:15377"/>
        <dbReference type="ChEBI" id="CHEBI:15378"/>
        <dbReference type="ChEBI" id="CHEBI:30616"/>
        <dbReference type="ChEBI" id="CHEBI:43474"/>
        <dbReference type="ChEBI" id="CHEBI:456216"/>
        <dbReference type="EC" id="7.1.2.2"/>
    </reaction>
</comment>
<comment type="subunit">
    <text evidence="1">F-type ATPases have 2 components, CF(1) - the catalytic core - and CF(0) - the membrane proton channel. CF(1) has five subunits: alpha(3), beta(3), gamma(1), delta(1), epsilon(1). CF(0) has four main subunits: a(1), b(1), b'(1) and c(9-12).</text>
</comment>
<comment type="subcellular location">
    <subcellularLocation>
        <location evidence="1">Plastid</location>
        <location evidence="1">Chloroplast thylakoid membrane</location>
        <topology evidence="1">Peripheral membrane protein</topology>
    </subcellularLocation>
</comment>
<comment type="similarity">
    <text evidence="1">Belongs to the ATPase alpha/beta chains family.</text>
</comment>
<evidence type="ECO:0000255" key="1">
    <source>
        <dbReference type="HAMAP-Rule" id="MF_01347"/>
    </source>
</evidence>
<keyword id="KW-0066">ATP synthesis</keyword>
<keyword id="KW-0067">ATP-binding</keyword>
<keyword id="KW-0139">CF(1)</keyword>
<keyword id="KW-0150">Chloroplast</keyword>
<keyword id="KW-0375">Hydrogen ion transport</keyword>
<keyword id="KW-0406">Ion transport</keyword>
<keyword id="KW-0472">Membrane</keyword>
<keyword id="KW-0547">Nucleotide-binding</keyword>
<keyword id="KW-0934">Plastid</keyword>
<keyword id="KW-0793">Thylakoid</keyword>
<keyword id="KW-1278">Translocase</keyword>
<keyword id="KW-0813">Transport</keyword>
<accession>P0C2Z7</accession>
<name>ATPB_ORYSA</name>
<gene>
    <name evidence="1" type="primary">atpB</name>
</gene>
<feature type="chain" id="PRO_0000288522" description="ATP synthase subunit beta, chloroplastic">
    <location>
        <begin position="1"/>
        <end position="498"/>
    </location>
</feature>
<feature type="binding site" evidence="1">
    <location>
        <begin position="172"/>
        <end position="179"/>
    </location>
    <ligand>
        <name>ATP</name>
        <dbReference type="ChEBI" id="CHEBI:30616"/>
    </ligand>
</feature>
<geneLocation type="chloroplast"/>
<dbReference type="EC" id="7.1.2.2" evidence="1"/>
<dbReference type="EMBL" id="AY522331">
    <property type="status" value="NOT_ANNOTATED_CDS"/>
    <property type="molecule type" value="Genomic_DNA"/>
</dbReference>
<dbReference type="RefSeq" id="YP_009305311.1">
    <property type="nucleotide sequence ID" value="NC_031333.1"/>
</dbReference>
<dbReference type="SMR" id="P0C2Z7"/>
<dbReference type="GeneID" id="29141377"/>
<dbReference type="ExpressionAtlas" id="P0C2Z7">
    <property type="expression patterns" value="baseline and differential"/>
</dbReference>
<dbReference type="GO" id="GO:0009535">
    <property type="term" value="C:chloroplast thylakoid membrane"/>
    <property type="evidence" value="ECO:0007669"/>
    <property type="project" value="UniProtKB-SubCell"/>
</dbReference>
<dbReference type="GO" id="GO:0005739">
    <property type="term" value="C:mitochondrion"/>
    <property type="evidence" value="ECO:0007669"/>
    <property type="project" value="GOC"/>
</dbReference>
<dbReference type="GO" id="GO:0009536">
    <property type="term" value="C:plastid"/>
    <property type="evidence" value="ECO:0000305"/>
    <property type="project" value="Gramene"/>
</dbReference>
<dbReference type="GO" id="GO:0045259">
    <property type="term" value="C:proton-transporting ATP synthase complex"/>
    <property type="evidence" value="ECO:0007669"/>
    <property type="project" value="UniProtKB-KW"/>
</dbReference>
<dbReference type="GO" id="GO:0005524">
    <property type="term" value="F:ATP binding"/>
    <property type="evidence" value="ECO:0007669"/>
    <property type="project" value="UniProtKB-UniRule"/>
</dbReference>
<dbReference type="GO" id="GO:0016887">
    <property type="term" value="F:ATP hydrolysis activity"/>
    <property type="evidence" value="ECO:0007669"/>
    <property type="project" value="InterPro"/>
</dbReference>
<dbReference type="GO" id="GO:0046933">
    <property type="term" value="F:proton-transporting ATP synthase activity, rotational mechanism"/>
    <property type="evidence" value="ECO:0007669"/>
    <property type="project" value="UniProtKB-UniRule"/>
</dbReference>
<dbReference type="GO" id="GO:0042776">
    <property type="term" value="P:proton motive force-driven mitochondrial ATP synthesis"/>
    <property type="evidence" value="ECO:0007669"/>
    <property type="project" value="TreeGrafter"/>
</dbReference>
<dbReference type="CDD" id="cd18110">
    <property type="entry name" value="ATP-synt_F1_beta_C"/>
    <property type="match status" value="1"/>
</dbReference>
<dbReference type="CDD" id="cd18115">
    <property type="entry name" value="ATP-synt_F1_beta_N"/>
    <property type="match status" value="1"/>
</dbReference>
<dbReference type="CDD" id="cd01133">
    <property type="entry name" value="F1-ATPase_beta_CD"/>
    <property type="match status" value="1"/>
</dbReference>
<dbReference type="FunFam" id="1.10.1140.10:FF:000001">
    <property type="entry name" value="ATP synthase subunit beta"/>
    <property type="match status" value="1"/>
</dbReference>
<dbReference type="FunFam" id="3.40.50.12240:FF:000006">
    <property type="entry name" value="ATP synthase subunit beta"/>
    <property type="match status" value="1"/>
</dbReference>
<dbReference type="FunFam" id="3.40.50.300:FF:000026">
    <property type="entry name" value="ATP synthase subunit beta"/>
    <property type="match status" value="1"/>
</dbReference>
<dbReference type="FunFam" id="2.40.10.170:FF:000002">
    <property type="entry name" value="ATP synthase subunit beta, chloroplastic"/>
    <property type="match status" value="1"/>
</dbReference>
<dbReference type="Gene3D" id="2.40.10.170">
    <property type="match status" value="1"/>
</dbReference>
<dbReference type="Gene3D" id="1.10.1140.10">
    <property type="entry name" value="Bovine Mitochondrial F1-atpase, Atp Synthase Beta Chain, Chain D, domain 3"/>
    <property type="match status" value="1"/>
</dbReference>
<dbReference type="Gene3D" id="3.40.50.300">
    <property type="entry name" value="P-loop containing nucleotide triphosphate hydrolases"/>
    <property type="match status" value="1"/>
</dbReference>
<dbReference type="HAMAP" id="MF_01347">
    <property type="entry name" value="ATP_synth_beta_bact"/>
    <property type="match status" value="1"/>
</dbReference>
<dbReference type="InterPro" id="IPR003593">
    <property type="entry name" value="AAA+_ATPase"/>
</dbReference>
<dbReference type="InterPro" id="IPR055190">
    <property type="entry name" value="ATP-synt_VA_C"/>
</dbReference>
<dbReference type="InterPro" id="IPR005722">
    <property type="entry name" value="ATP_synth_F1_bsu"/>
</dbReference>
<dbReference type="InterPro" id="IPR020003">
    <property type="entry name" value="ATPase_a/bsu_AS"/>
</dbReference>
<dbReference type="InterPro" id="IPR050053">
    <property type="entry name" value="ATPase_alpha/beta_chains"/>
</dbReference>
<dbReference type="InterPro" id="IPR004100">
    <property type="entry name" value="ATPase_F1/V1/A1_a/bsu_N"/>
</dbReference>
<dbReference type="InterPro" id="IPR036121">
    <property type="entry name" value="ATPase_F1/V1/A1_a/bsu_N_sf"/>
</dbReference>
<dbReference type="InterPro" id="IPR000194">
    <property type="entry name" value="ATPase_F1/V1/A1_a/bsu_nucl-bd"/>
</dbReference>
<dbReference type="InterPro" id="IPR024034">
    <property type="entry name" value="ATPase_F1/V1_b/a_C"/>
</dbReference>
<dbReference type="InterPro" id="IPR027417">
    <property type="entry name" value="P-loop_NTPase"/>
</dbReference>
<dbReference type="NCBIfam" id="TIGR01039">
    <property type="entry name" value="atpD"/>
    <property type="match status" value="1"/>
</dbReference>
<dbReference type="PANTHER" id="PTHR15184">
    <property type="entry name" value="ATP SYNTHASE"/>
    <property type="match status" value="1"/>
</dbReference>
<dbReference type="PANTHER" id="PTHR15184:SF71">
    <property type="entry name" value="ATP SYNTHASE SUBUNIT BETA, MITOCHONDRIAL"/>
    <property type="match status" value="1"/>
</dbReference>
<dbReference type="Pfam" id="PF00006">
    <property type="entry name" value="ATP-synt_ab"/>
    <property type="match status" value="1"/>
</dbReference>
<dbReference type="Pfam" id="PF02874">
    <property type="entry name" value="ATP-synt_ab_N"/>
    <property type="match status" value="1"/>
</dbReference>
<dbReference type="Pfam" id="PF22919">
    <property type="entry name" value="ATP-synt_VA_C"/>
    <property type="match status" value="1"/>
</dbReference>
<dbReference type="SMART" id="SM00382">
    <property type="entry name" value="AAA"/>
    <property type="match status" value="1"/>
</dbReference>
<dbReference type="SUPFAM" id="SSF47917">
    <property type="entry name" value="C-terminal domain of alpha and beta subunits of F1 ATP synthase"/>
    <property type="match status" value="1"/>
</dbReference>
<dbReference type="SUPFAM" id="SSF50615">
    <property type="entry name" value="N-terminal domain of alpha and beta subunits of F1 ATP synthase"/>
    <property type="match status" value="1"/>
</dbReference>
<dbReference type="SUPFAM" id="SSF52540">
    <property type="entry name" value="P-loop containing nucleoside triphosphate hydrolases"/>
    <property type="match status" value="1"/>
</dbReference>
<dbReference type="PROSITE" id="PS00152">
    <property type="entry name" value="ATPASE_ALPHA_BETA"/>
    <property type="match status" value="1"/>
</dbReference>